<sequence length="836" mass="92672">MPINYTNLLLMLRECKNFRCLLQVHGSLIVSGLKPHNQLINAYSLFQRQDLSRVIFDSVRDPGVVLWNSMIRGYTRAGLHREALGFFGYMSEEKGIDPDKYSFTFALKACAGSMDFKKGLRIHDLIAEMGLESDVYIGTALVEMYCKARDLVSARQVFDKMHVKDVVTWNTMVSGLAQNGCSSAALLLFHDMRSCCVDIDHVSLYNLIPAVSKLEKSDVCRCLHGLVIKKGFIFAFSSGLIDMYCNCADLYAAESVFEEVWRKDESSWGTMMAAYAHNGFFEEVLELFDLMRNYDVRMNKVAAASALQAAAYVGDLVKGIAIHDYAVQQGLIGDVSVATSLMSMYSKCGELEIAEQLFINIEDRDVVSWSAMIASYEQAGQHDEAISLFRDMMRIHIKPNAVTLTSVLQGCAGVAASRLGKSIHCYAIKADIESELETATAVISMYAKCGRFSPALKAFERLPIKDAVAFNALAQGYTQIGDANKAFDVYKNMKLHGVCPDSRTMVGMLQTCAFCSDYARGSCVYGQIIKHGFDSECHVAHALINMFTKCDALAAAIVLFDKCGFEKSTVSWNIMMNGYLLHGQAEEAVATFRQMKVEKFQPNAVTFVNIVRAAAELSALRVGMSVHSSLIQCGFCSQTPVGNSLVDMYAKCGMIESSEKCFIEISNKYIVSWNTMLSAYAAHGLASCAVSLFLSMQENELKPDSVSFLSVLSACRHAGLVEEGKRIFEEMGERHKIEAEVEHYACMVDLLGKAGLFGEAVEMMRRMRVKTSVGVWGALLNSSRMHCNLWLSNAALCQLVKLEPLNPSHYSQDRRLGEVNNVSRIKKVPACSWIEV</sequence>
<evidence type="ECO:0000305" key="1"/>
<accession>O80647</accession>
<dbReference type="EMBL" id="AC004218">
    <property type="protein sequence ID" value="AAC27851.1"/>
    <property type="molecule type" value="Genomic_DNA"/>
</dbReference>
<dbReference type="EMBL" id="CP002685">
    <property type="protein sequence ID" value="AEC09698.1"/>
    <property type="molecule type" value="Genomic_DNA"/>
</dbReference>
<dbReference type="PIR" id="T00570">
    <property type="entry name" value="T00570"/>
</dbReference>
<dbReference type="RefSeq" id="NP_181492.1">
    <property type="nucleotide sequence ID" value="NM_129518.2"/>
</dbReference>
<dbReference type="SMR" id="O80647"/>
<dbReference type="FunCoup" id="O80647">
    <property type="interactions" value="60"/>
</dbReference>
<dbReference type="STRING" id="3702.O80647"/>
<dbReference type="PaxDb" id="3702-AT2G39620.1"/>
<dbReference type="ProteomicsDB" id="249156"/>
<dbReference type="EnsemblPlants" id="AT2G39620.1">
    <property type="protein sequence ID" value="AT2G39620.1"/>
    <property type="gene ID" value="AT2G39620"/>
</dbReference>
<dbReference type="GeneID" id="818545"/>
<dbReference type="Gramene" id="AT2G39620.1">
    <property type="protein sequence ID" value="AT2G39620.1"/>
    <property type="gene ID" value="AT2G39620"/>
</dbReference>
<dbReference type="KEGG" id="ath:AT2G39620"/>
<dbReference type="Araport" id="AT2G39620"/>
<dbReference type="TAIR" id="AT2G39620"/>
<dbReference type="eggNOG" id="KOG4197">
    <property type="taxonomic scope" value="Eukaryota"/>
</dbReference>
<dbReference type="HOGENOM" id="CLU_002706_15_6_1"/>
<dbReference type="InParanoid" id="O80647"/>
<dbReference type="OMA" id="SDIYAQC"/>
<dbReference type="PhylomeDB" id="O80647"/>
<dbReference type="PRO" id="PR:O80647"/>
<dbReference type="Proteomes" id="UP000006548">
    <property type="component" value="Chromosome 2"/>
</dbReference>
<dbReference type="ExpressionAtlas" id="O80647">
    <property type="expression patterns" value="baseline and differential"/>
</dbReference>
<dbReference type="GO" id="GO:0003723">
    <property type="term" value="F:RNA binding"/>
    <property type="evidence" value="ECO:0007669"/>
    <property type="project" value="InterPro"/>
</dbReference>
<dbReference type="GO" id="GO:0009451">
    <property type="term" value="P:RNA modification"/>
    <property type="evidence" value="ECO:0007669"/>
    <property type="project" value="InterPro"/>
</dbReference>
<dbReference type="FunFam" id="1.25.40.10:FF:000344">
    <property type="entry name" value="Pentatricopeptide repeat-containing protein"/>
    <property type="match status" value="1"/>
</dbReference>
<dbReference type="FunFam" id="1.25.40.10:FF:003634">
    <property type="entry name" value="Pentatricopeptide repeat-containing protein At2g39620"/>
    <property type="match status" value="1"/>
</dbReference>
<dbReference type="FunFam" id="1.25.40.10:FF:000073">
    <property type="entry name" value="Pentatricopeptide repeat-containing protein chloroplastic"/>
    <property type="match status" value="3"/>
</dbReference>
<dbReference type="FunFam" id="1.25.40.10:FF:000277">
    <property type="entry name" value="Pentatricopeptide repeat-containing protein, mitochondrial"/>
    <property type="match status" value="1"/>
</dbReference>
<dbReference type="Gene3D" id="1.25.40.10">
    <property type="entry name" value="Tetratricopeptide repeat domain"/>
    <property type="match status" value="8"/>
</dbReference>
<dbReference type="InterPro" id="IPR002885">
    <property type="entry name" value="Pentatricopeptide_rpt"/>
</dbReference>
<dbReference type="InterPro" id="IPR046960">
    <property type="entry name" value="PPR_At4g14850-like_plant"/>
</dbReference>
<dbReference type="InterPro" id="IPR011990">
    <property type="entry name" value="TPR-like_helical_dom_sf"/>
</dbReference>
<dbReference type="NCBIfam" id="TIGR00756">
    <property type="entry name" value="PPR"/>
    <property type="match status" value="9"/>
</dbReference>
<dbReference type="PANTHER" id="PTHR47926">
    <property type="entry name" value="PENTATRICOPEPTIDE REPEAT-CONTAINING PROTEIN"/>
    <property type="match status" value="1"/>
</dbReference>
<dbReference type="PANTHER" id="PTHR47926:SF347">
    <property type="entry name" value="PENTATRICOPEPTIDE REPEAT-CONTAINING PROTEIN"/>
    <property type="match status" value="1"/>
</dbReference>
<dbReference type="Pfam" id="PF01535">
    <property type="entry name" value="PPR"/>
    <property type="match status" value="6"/>
</dbReference>
<dbReference type="Pfam" id="PF13041">
    <property type="entry name" value="PPR_2"/>
    <property type="match status" value="5"/>
</dbReference>
<dbReference type="SUPFAM" id="SSF48452">
    <property type="entry name" value="TPR-like"/>
    <property type="match status" value="1"/>
</dbReference>
<dbReference type="PROSITE" id="PS51375">
    <property type="entry name" value="PPR"/>
    <property type="match status" value="17"/>
</dbReference>
<gene>
    <name type="primary">PCMP-E33</name>
    <name type="ordered locus">At2g39620</name>
    <name type="ORF">F12L6.28</name>
</gene>
<proteinExistence type="inferred from homology"/>
<name>PP195_ARATH</name>
<comment type="similarity">
    <text evidence="1">Belongs to the PPR family. PCMP-E subfamily.</text>
</comment>
<comment type="online information" name="Pentatricopeptide repeat proteins">
    <link uri="https://ppr.plantenergy.uwa.edu.au"/>
</comment>
<protein>
    <recommendedName>
        <fullName>Pentatricopeptide repeat-containing protein At2g39620</fullName>
    </recommendedName>
</protein>
<feature type="chain" id="PRO_0000356054" description="Pentatricopeptide repeat-containing protein At2g39620">
    <location>
        <begin position="1"/>
        <end position="836"/>
    </location>
</feature>
<feature type="repeat" description="PPR 1">
    <location>
        <begin position="1"/>
        <end position="35"/>
    </location>
</feature>
<feature type="repeat" description="PPR 2">
    <location>
        <begin position="36"/>
        <end position="62"/>
    </location>
</feature>
<feature type="repeat" description="PPR 3">
    <location>
        <begin position="63"/>
        <end position="98"/>
    </location>
</feature>
<feature type="repeat" description="PPR 4">
    <location>
        <begin position="99"/>
        <end position="133"/>
    </location>
</feature>
<feature type="repeat" description="PPR 5">
    <location>
        <begin position="134"/>
        <end position="164"/>
    </location>
</feature>
<feature type="repeat" description="PPR 6">
    <location>
        <begin position="165"/>
        <end position="199"/>
    </location>
</feature>
<feature type="repeat" description="PPR 7">
    <location>
        <begin position="200"/>
        <end position="230"/>
    </location>
</feature>
<feature type="repeat" description="PPR 8">
    <location>
        <begin position="233"/>
        <end position="263"/>
    </location>
</feature>
<feature type="repeat" description="PPR 9">
    <location>
        <begin position="264"/>
        <end position="298"/>
    </location>
</feature>
<feature type="repeat" description="PPR 10">
    <location>
        <begin position="299"/>
        <end position="333"/>
    </location>
</feature>
<feature type="repeat" description="PPR 11">
    <location>
        <begin position="334"/>
        <end position="364"/>
    </location>
</feature>
<feature type="repeat" description="PPR 12">
    <location>
        <begin position="365"/>
        <end position="399"/>
    </location>
</feature>
<feature type="repeat" description="PPR 13">
    <location>
        <begin position="400"/>
        <end position="434"/>
    </location>
</feature>
<feature type="repeat" description="PPR 14">
    <location>
        <begin position="435"/>
        <end position="465"/>
    </location>
</feature>
<feature type="repeat" description="PPR 15">
    <location>
        <begin position="466"/>
        <end position="500"/>
    </location>
</feature>
<feature type="repeat" description="PPR 16">
    <location>
        <begin position="501"/>
        <end position="535"/>
    </location>
</feature>
<feature type="repeat" description="PPR 17">
    <location>
        <begin position="536"/>
        <end position="566"/>
    </location>
</feature>
<feature type="repeat" description="PPR 18">
    <location>
        <begin position="568"/>
        <end position="602"/>
    </location>
</feature>
<feature type="repeat" description="PPR 19">
    <location>
        <begin position="603"/>
        <end position="637"/>
    </location>
</feature>
<feature type="repeat" description="PPR 20">
    <location>
        <begin position="638"/>
        <end position="668"/>
    </location>
</feature>
<feature type="repeat" description="PPR 21">
    <location>
        <begin position="669"/>
        <end position="703"/>
    </location>
</feature>
<feature type="repeat" description="PPR 22">
    <location>
        <begin position="704"/>
        <end position="734"/>
    </location>
</feature>
<feature type="repeat" description="PPR 23">
    <location>
        <begin position="740"/>
        <end position="770"/>
    </location>
</feature>
<feature type="region of interest" description="Type E motif; degenerate">
    <location>
        <begin position="775"/>
        <end position="836"/>
    </location>
</feature>
<reference key="1">
    <citation type="journal article" date="1999" name="Nature">
        <title>Sequence and analysis of chromosome 2 of the plant Arabidopsis thaliana.</title>
        <authorList>
            <person name="Lin X."/>
            <person name="Kaul S."/>
            <person name="Rounsley S.D."/>
            <person name="Shea T.P."/>
            <person name="Benito M.-I."/>
            <person name="Town C.D."/>
            <person name="Fujii C.Y."/>
            <person name="Mason T.M."/>
            <person name="Bowman C.L."/>
            <person name="Barnstead M.E."/>
            <person name="Feldblyum T.V."/>
            <person name="Buell C.R."/>
            <person name="Ketchum K.A."/>
            <person name="Lee J.J."/>
            <person name="Ronning C.M."/>
            <person name="Koo H.L."/>
            <person name="Moffat K.S."/>
            <person name="Cronin L.A."/>
            <person name="Shen M."/>
            <person name="Pai G."/>
            <person name="Van Aken S."/>
            <person name="Umayam L."/>
            <person name="Tallon L.J."/>
            <person name="Gill J.E."/>
            <person name="Adams M.D."/>
            <person name="Carrera A.J."/>
            <person name="Creasy T.H."/>
            <person name="Goodman H.M."/>
            <person name="Somerville C.R."/>
            <person name="Copenhaver G.P."/>
            <person name="Preuss D."/>
            <person name="Nierman W.C."/>
            <person name="White O."/>
            <person name="Eisen J.A."/>
            <person name="Salzberg S.L."/>
            <person name="Fraser C.M."/>
            <person name="Venter J.C."/>
        </authorList>
    </citation>
    <scope>NUCLEOTIDE SEQUENCE [LARGE SCALE GENOMIC DNA]</scope>
    <source>
        <strain>cv. Columbia</strain>
    </source>
</reference>
<reference key="2">
    <citation type="journal article" date="2017" name="Plant J.">
        <title>Araport11: a complete reannotation of the Arabidopsis thaliana reference genome.</title>
        <authorList>
            <person name="Cheng C.Y."/>
            <person name="Krishnakumar V."/>
            <person name="Chan A.P."/>
            <person name="Thibaud-Nissen F."/>
            <person name="Schobel S."/>
            <person name="Town C.D."/>
        </authorList>
    </citation>
    <scope>GENOME REANNOTATION</scope>
    <source>
        <strain>cv. Columbia</strain>
    </source>
</reference>
<reference key="3">
    <citation type="journal article" date="2000" name="Plant Mol. Biol.">
        <title>In Arabidopsis thaliana, 1% of the genome codes for a novel protein family unique to plants.</title>
        <authorList>
            <person name="Aubourg S."/>
            <person name="Boudet N."/>
            <person name="Kreis M."/>
            <person name="Lecharny A."/>
        </authorList>
    </citation>
    <scope>GENE FAMILY</scope>
</reference>
<reference key="4">
    <citation type="journal article" date="2004" name="Plant Cell">
        <title>Genome-wide analysis of Arabidopsis pentatricopeptide repeat proteins reveals their essential role in organelle biogenesis.</title>
        <authorList>
            <person name="Lurin C."/>
            <person name="Andres C."/>
            <person name="Aubourg S."/>
            <person name="Bellaoui M."/>
            <person name="Bitton F."/>
            <person name="Bruyere C."/>
            <person name="Caboche M."/>
            <person name="Debast C."/>
            <person name="Gualberto J."/>
            <person name="Hoffmann B."/>
            <person name="Lecharny A."/>
            <person name="Le Ret M."/>
            <person name="Martin-Magniette M.-L."/>
            <person name="Mireau H."/>
            <person name="Peeters N."/>
            <person name="Renou J.-P."/>
            <person name="Szurek B."/>
            <person name="Taconnat L."/>
            <person name="Small I."/>
        </authorList>
    </citation>
    <scope>GENE FAMILY</scope>
</reference>
<keyword id="KW-1185">Reference proteome</keyword>
<keyword id="KW-0677">Repeat</keyword>
<organism>
    <name type="scientific">Arabidopsis thaliana</name>
    <name type="common">Mouse-ear cress</name>
    <dbReference type="NCBI Taxonomy" id="3702"/>
    <lineage>
        <taxon>Eukaryota</taxon>
        <taxon>Viridiplantae</taxon>
        <taxon>Streptophyta</taxon>
        <taxon>Embryophyta</taxon>
        <taxon>Tracheophyta</taxon>
        <taxon>Spermatophyta</taxon>
        <taxon>Magnoliopsida</taxon>
        <taxon>eudicotyledons</taxon>
        <taxon>Gunneridae</taxon>
        <taxon>Pentapetalae</taxon>
        <taxon>rosids</taxon>
        <taxon>malvids</taxon>
        <taxon>Brassicales</taxon>
        <taxon>Brassicaceae</taxon>
        <taxon>Camelineae</taxon>
        <taxon>Arabidopsis</taxon>
    </lineage>
</organism>